<keyword id="KW-0004">4Fe-4S</keyword>
<keyword id="KW-0238">DNA-binding</keyword>
<keyword id="KW-0269">Exonuclease</keyword>
<keyword id="KW-0378">Hydrolase</keyword>
<keyword id="KW-0408">Iron</keyword>
<keyword id="KW-0411">Iron-sulfur</keyword>
<keyword id="KW-0460">Magnesium</keyword>
<keyword id="KW-0479">Metal-binding</keyword>
<keyword id="KW-0496">Mitochondrion</keyword>
<keyword id="KW-0540">Nuclease</keyword>
<keyword id="KW-1185">Reference proteome</keyword>
<keyword id="KW-0809">Transit peptide</keyword>
<name>EXO5_VANPO</name>
<organism>
    <name type="scientific">Vanderwaltozyma polyspora (strain ATCC 22028 / DSM 70294 / BCRC 21397 / CBS 2163 / NBRC 10782 / NRRL Y-8283 / UCD 57-17)</name>
    <name type="common">Kluyveromyces polysporus</name>
    <dbReference type="NCBI Taxonomy" id="436907"/>
    <lineage>
        <taxon>Eukaryota</taxon>
        <taxon>Fungi</taxon>
        <taxon>Dikarya</taxon>
        <taxon>Ascomycota</taxon>
        <taxon>Saccharomycotina</taxon>
        <taxon>Saccharomycetes</taxon>
        <taxon>Saccharomycetales</taxon>
        <taxon>Saccharomycetaceae</taxon>
        <taxon>Vanderwaltozyma</taxon>
    </lineage>
</organism>
<comment type="function">
    <text evidence="1">Single strand DNA specific 5'exonuclease involved in mitochondrial DNA replication and recombination. Releases dinucleotides as main products of catalysis. Has the capacity to slide across 5'double-stranded DNA or 5'RNA sequences and resumes cutting two nucleotides downstream of the double-stranded-to-single-stranded junction or RNA-to-DNA junction, respectively (By similarity).</text>
</comment>
<comment type="cofactor">
    <cofactor evidence="1">
        <name>Mg(2+)</name>
        <dbReference type="ChEBI" id="CHEBI:18420"/>
    </cofactor>
</comment>
<comment type="cofactor">
    <cofactor evidence="1">
        <name>[4Fe-4S] cluster</name>
        <dbReference type="ChEBI" id="CHEBI:49883"/>
    </cofactor>
    <text evidence="1">Binds 1 [4Fe-4S] cluster.</text>
</comment>
<comment type="subunit">
    <text evidence="1">Monomer.</text>
</comment>
<comment type="subcellular location">
    <subcellularLocation>
        <location evidence="1">Mitochondrion</location>
    </subcellularLocation>
</comment>
<comment type="similarity">
    <text evidence="3">Belongs to the EXO5 family.</text>
</comment>
<proteinExistence type="inferred from homology"/>
<feature type="transit peptide" description="Mitochondrion" evidence="2">
    <location>
        <begin position="1"/>
        <end position="17"/>
    </location>
</feature>
<feature type="chain" id="PRO_0000406690" description="Exonuclease V, mitochondrial">
    <location>
        <begin position="18"/>
        <end position="554"/>
    </location>
</feature>
<feature type="binding site" evidence="1">
    <location>
        <position position="138"/>
    </location>
    <ligand>
        <name>[4Fe-4S] cluster</name>
        <dbReference type="ChEBI" id="CHEBI:49883"/>
    </ligand>
</feature>
<feature type="binding site" evidence="1">
    <location>
        <position position="522"/>
    </location>
    <ligand>
        <name>[4Fe-4S] cluster</name>
        <dbReference type="ChEBI" id="CHEBI:49883"/>
    </ligand>
</feature>
<feature type="binding site" evidence="1">
    <location>
        <position position="525"/>
    </location>
    <ligand>
        <name>[4Fe-4S] cluster</name>
        <dbReference type="ChEBI" id="CHEBI:49883"/>
    </ligand>
</feature>
<feature type="binding site" evidence="1">
    <location>
        <position position="531"/>
    </location>
    <ligand>
        <name>[4Fe-4S] cluster</name>
        <dbReference type="ChEBI" id="CHEBI:49883"/>
    </ligand>
</feature>
<evidence type="ECO:0000250" key="1"/>
<evidence type="ECO:0000255" key="2"/>
<evidence type="ECO:0000305" key="3"/>
<protein>
    <recommendedName>
        <fullName>Exonuclease V, mitochondrial</fullName>
        <shortName>Exo V</shortName>
        <ecNumber>3.1.-.-</ecNumber>
    </recommendedName>
    <alternativeName>
        <fullName>Defects in morphology protein 1</fullName>
    </alternativeName>
</protein>
<reference key="1">
    <citation type="journal article" date="2007" name="Proc. Natl. Acad. Sci. U.S.A.">
        <title>Independent sorting-out of thousands of duplicated gene pairs in two yeast species descended from a whole-genome duplication.</title>
        <authorList>
            <person name="Scannell D.R."/>
            <person name="Frank A.C."/>
            <person name="Conant G.C."/>
            <person name="Byrne K.P."/>
            <person name="Woolfit M."/>
            <person name="Wolfe K.H."/>
        </authorList>
    </citation>
    <scope>NUCLEOTIDE SEQUENCE [LARGE SCALE GENOMIC DNA]</scope>
    <source>
        <strain>ATCC 22028 / DSM 70294 / BCRC 21397 / CBS 2163 / NBRC 10782 / NRRL Y-8283 / UCD 57-17</strain>
    </source>
</reference>
<dbReference type="EC" id="3.1.-.-"/>
<dbReference type="EMBL" id="DS480423">
    <property type="protein sequence ID" value="EDO16494.1"/>
    <property type="molecule type" value="Genomic_DNA"/>
</dbReference>
<dbReference type="RefSeq" id="XP_001644352.1">
    <property type="nucleotide sequence ID" value="XM_001644302.1"/>
</dbReference>
<dbReference type="FunCoup" id="A7TMJ6">
    <property type="interactions" value="30"/>
</dbReference>
<dbReference type="GeneID" id="5544678"/>
<dbReference type="KEGG" id="vpo:Kpol_513p10"/>
<dbReference type="eggNOG" id="ENOG502QR0P">
    <property type="taxonomic scope" value="Eukaryota"/>
</dbReference>
<dbReference type="HOGENOM" id="CLU_019985_0_0_1"/>
<dbReference type="InParanoid" id="A7TMJ6"/>
<dbReference type="OMA" id="LQVMYYR"/>
<dbReference type="OrthoDB" id="354769at2759"/>
<dbReference type="PhylomeDB" id="A7TMJ6"/>
<dbReference type="Proteomes" id="UP000000267">
    <property type="component" value="Unassembled WGS sequence"/>
</dbReference>
<dbReference type="GO" id="GO:0005739">
    <property type="term" value="C:mitochondrion"/>
    <property type="evidence" value="ECO:0007669"/>
    <property type="project" value="UniProtKB-SubCell"/>
</dbReference>
<dbReference type="GO" id="GO:0005634">
    <property type="term" value="C:nucleus"/>
    <property type="evidence" value="ECO:0007669"/>
    <property type="project" value="TreeGrafter"/>
</dbReference>
<dbReference type="GO" id="GO:0051539">
    <property type="term" value="F:4 iron, 4 sulfur cluster binding"/>
    <property type="evidence" value="ECO:0007669"/>
    <property type="project" value="UniProtKB-KW"/>
</dbReference>
<dbReference type="GO" id="GO:0003677">
    <property type="term" value="F:DNA binding"/>
    <property type="evidence" value="ECO:0007669"/>
    <property type="project" value="UniProtKB-KW"/>
</dbReference>
<dbReference type="GO" id="GO:0046872">
    <property type="term" value="F:metal ion binding"/>
    <property type="evidence" value="ECO:0007669"/>
    <property type="project" value="UniProtKB-KW"/>
</dbReference>
<dbReference type="GO" id="GO:0045145">
    <property type="term" value="F:single-stranded DNA 5'-3' DNA exonuclease activity"/>
    <property type="evidence" value="ECO:0007669"/>
    <property type="project" value="EnsemblFungi"/>
</dbReference>
<dbReference type="GO" id="GO:0036297">
    <property type="term" value="P:interstrand cross-link repair"/>
    <property type="evidence" value="ECO:0007669"/>
    <property type="project" value="TreeGrafter"/>
</dbReference>
<dbReference type="GO" id="GO:0000002">
    <property type="term" value="P:mitochondrial genome maintenance"/>
    <property type="evidence" value="ECO:0007669"/>
    <property type="project" value="EnsemblFungi"/>
</dbReference>
<dbReference type="InterPro" id="IPR019190">
    <property type="entry name" value="EXOV"/>
</dbReference>
<dbReference type="PANTHER" id="PTHR14464">
    <property type="entry name" value="EXONUCLEASE V"/>
    <property type="match status" value="1"/>
</dbReference>
<dbReference type="PANTHER" id="PTHR14464:SF4">
    <property type="entry name" value="EXONUCLEASE V"/>
    <property type="match status" value="1"/>
</dbReference>
<dbReference type="Pfam" id="PF09810">
    <property type="entry name" value="Exo5"/>
    <property type="match status" value="1"/>
</dbReference>
<accession>A7TMJ6</accession>
<gene>
    <name type="primary">EXO5</name>
    <name type="synonym">DEM1</name>
    <name type="ORF">Kpol_513p10</name>
</gene>
<sequence length="554" mass="64775">MLRCRSSINILQLHSRFHTHEIIISSKESEARTRITDEERLVIKRFPIFKNDSSYILPSSNKLTKVKKEHIALKIHKIKKLFGEDPNNVGYLNYHLPKSYPVPFEINNRAYDNSDGNGENEKVRNRLSVTKLLTKRWCELREAYDIYSETPLFEHKQIIEGKLVHQKLEEDIHPVTEDLESFVEDFEVPIPTDNFHNHVDDLFSCSMRLLSLFRCGEAREVRCHAFLDSRTGTFIDGLPKDGKDVLVSGIIDHLSLRRKIRVFTSSGFTEFNGLNDEVFENGNNFQSIIEWLNANIDFLKSEYQINVSDVKTRMFRSVVSQKSVLKYSKYQVMYYRYFLELLGLHPDVTYGQLLNSSLSRGFNIDQRIDPAKVIYFMASDEVIVDDMRKLRDGDDIGFPPFDSDFTGSSPTEEEYDMSILSDQITDPNVLERYGEFLVPWKRPVTLKYFAARLAQMYNCISPLLSKHLTLEYYYKGDNFKNINFDFNEDEIRNGAFDSSMFWFGKRDIEPIEPTSENLITYCKYCDYVNVCSWRQKATQQKKELGPRLLKLNQN</sequence>